<proteinExistence type="inferred from homology"/>
<name>ARGC_LACLA</name>
<keyword id="KW-0028">Amino-acid biosynthesis</keyword>
<keyword id="KW-0055">Arginine biosynthesis</keyword>
<keyword id="KW-0963">Cytoplasm</keyword>
<keyword id="KW-0521">NADP</keyword>
<keyword id="KW-0560">Oxidoreductase</keyword>
<keyword id="KW-1185">Reference proteome</keyword>
<dbReference type="EC" id="1.2.1.38" evidence="1"/>
<dbReference type="EMBL" id="AE005176">
    <property type="protein sequence ID" value="AAK04895.1"/>
    <property type="molecule type" value="Genomic_DNA"/>
</dbReference>
<dbReference type="PIR" id="E86724">
    <property type="entry name" value="E86724"/>
</dbReference>
<dbReference type="RefSeq" id="NP_266953.1">
    <property type="nucleotide sequence ID" value="NC_002662.1"/>
</dbReference>
<dbReference type="RefSeq" id="WP_010905564.1">
    <property type="nucleotide sequence ID" value="NC_002662.1"/>
</dbReference>
<dbReference type="SMR" id="Q9CHD5"/>
<dbReference type="PaxDb" id="272623-L0104"/>
<dbReference type="EnsemblBacteria" id="AAK04895">
    <property type="protein sequence ID" value="AAK04895"/>
    <property type="gene ID" value="L0104"/>
</dbReference>
<dbReference type="KEGG" id="lla:L0104"/>
<dbReference type="PATRIC" id="fig|272623.7.peg.853"/>
<dbReference type="eggNOG" id="COG0002">
    <property type="taxonomic scope" value="Bacteria"/>
</dbReference>
<dbReference type="HOGENOM" id="CLU_006384_0_1_9"/>
<dbReference type="OrthoDB" id="9801289at2"/>
<dbReference type="UniPathway" id="UPA00068">
    <property type="reaction ID" value="UER00108"/>
</dbReference>
<dbReference type="Proteomes" id="UP000002196">
    <property type="component" value="Chromosome"/>
</dbReference>
<dbReference type="GO" id="GO:0005737">
    <property type="term" value="C:cytoplasm"/>
    <property type="evidence" value="ECO:0007669"/>
    <property type="project" value="UniProtKB-SubCell"/>
</dbReference>
<dbReference type="GO" id="GO:0003942">
    <property type="term" value="F:N-acetyl-gamma-glutamyl-phosphate reductase activity"/>
    <property type="evidence" value="ECO:0007669"/>
    <property type="project" value="UniProtKB-UniRule"/>
</dbReference>
<dbReference type="GO" id="GO:0051287">
    <property type="term" value="F:NAD binding"/>
    <property type="evidence" value="ECO:0007669"/>
    <property type="project" value="InterPro"/>
</dbReference>
<dbReference type="GO" id="GO:0070401">
    <property type="term" value="F:NADP+ binding"/>
    <property type="evidence" value="ECO:0007669"/>
    <property type="project" value="InterPro"/>
</dbReference>
<dbReference type="GO" id="GO:0006526">
    <property type="term" value="P:L-arginine biosynthetic process"/>
    <property type="evidence" value="ECO:0007669"/>
    <property type="project" value="UniProtKB-UniRule"/>
</dbReference>
<dbReference type="CDD" id="cd23934">
    <property type="entry name" value="AGPR_1_C"/>
    <property type="match status" value="1"/>
</dbReference>
<dbReference type="CDD" id="cd17895">
    <property type="entry name" value="AGPR_1_N"/>
    <property type="match status" value="1"/>
</dbReference>
<dbReference type="FunFam" id="3.30.360.10:FF:000014">
    <property type="entry name" value="N-acetyl-gamma-glutamyl-phosphate reductase"/>
    <property type="match status" value="1"/>
</dbReference>
<dbReference type="Gene3D" id="3.30.360.10">
    <property type="entry name" value="Dihydrodipicolinate Reductase, domain 2"/>
    <property type="match status" value="1"/>
</dbReference>
<dbReference type="Gene3D" id="3.40.50.720">
    <property type="entry name" value="NAD(P)-binding Rossmann-like Domain"/>
    <property type="match status" value="1"/>
</dbReference>
<dbReference type="HAMAP" id="MF_00150">
    <property type="entry name" value="ArgC_type1"/>
    <property type="match status" value="1"/>
</dbReference>
<dbReference type="InterPro" id="IPR023013">
    <property type="entry name" value="AGPR_AS"/>
</dbReference>
<dbReference type="InterPro" id="IPR000706">
    <property type="entry name" value="AGPR_type-1"/>
</dbReference>
<dbReference type="InterPro" id="IPR036291">
    <property type="entry name" value="NAD(P)-bd_dom_sf"/>
</dbReference>
<dbReference type="InterPro" id="IPR050085">
    <property type="entry name" value="NAGSA_dehydrogenase"/>
</dbReference>
<dbReference type="InterPro" id="IPR000534">
    <property type="entry name" value="Semialdehyde_DH_NAD-bd"/>
</dbReference>
<dbReference type="NCBIfam" id="TIGR01850">
    <property type="entry name" value="argC"/>
    <property type="match status" value="1"/>
</dbReference>
<dbReference type="PANTHER" id="PTHR32338:SF10">
    <property type="entry name" value="N-ACETYL-GAMMA-GLUTAMYL-PHOSPHATE REDUCTASE, CHLOROPLASTIC-RELATED"/>
    <property type="match status" value="1"/>
</dbReference>
<dbReference type="PANTHER" id="PTHR32338">
    <property type="entry name" value="N-ACETYL-GAMMA-GLUTAMYL-PHOSPHATE REDUCTASE, CHLOROPLASTIC-RELATED-RELATED"/>
    <property type="match status" value="1"/>
</dbReference>
<dbReference type="Pfam" id="PF01118">
    <property type="entry name" value="Semialdhyde_dh"/>
    <property type="match status" value="1"/>
</dbReference>
<dbReference type="Pfam" id="PF22698">
    <property type="entry name" value="Semialdhyde_dhC_1"/>
    <property type="match status" value="1"/>
</dbReference>
<dbReference type="SMART" id="SM00859">
    <property type="entry name" value="Semialdhyde_dh"/>
    <property type="match status" value="1"/>
</dbReference>
<dbReference type="SUPFAM" id="SSF55347">
    <property type="entry name" value="Glyceraldehyde-3-phosphate dehydrogenase-like, C-terminal domain"/>
    <property type="match status" value="1"/>
</dbReference>
<dbReference type="SUPFAM" id="SSF51735">
    <property type="entry name" value="NAD(P)-binding Rossmann-fold domains"/>
    <property type="match status" value="1"/>
</dbReference>
<dbReference type="PROSITE" id="PS01224">
    <property type="entry name" value="ARGC"/>
    <property type="match status" value="1"/>
</dbReference>
<organism>
    <name type="scientific">Lactococcus lactis subsp. lactis (strain IL1403)</name>
    <name type="common">Streptococcus lactis</name>
    <dbReference type="NCBI Taxonomy" id="272623"/>
    <lineage>
        <taxon>Bacteria</taxon>
        <taxon>Bacillati</taxon>
        <taxon>Bacillota</taxon>
        <taxon>Bacilli</taxon>
        <taxon>Lactobacillales</taxon>
        <taxon>Streptococcaceae</taxon>
        <taxon>Lactococcus</taxon>
    </lineage>
</organism>
<reference key="1">
    <citation type="journal article" date="2001" name="Genome Res.">
        <title>The complete genome sequence of the lactic acid bacterium Lactococcus lactis ssp. lactis IL1403.</title>
        <authorList>
            <person name="Bolotin A."/>
            <person name="Wincker P."/>
            <person name="Mauger S."/>
            <person name="Jaillon O."/>
            <person name="Malarme K."/>
            <person name="Weissenbach J."/>
            <person name="Ehrlich S.D."/>
            <person name="Sorokin A."/>
        </authorList>
    </citation>
    <scope>NUCLEOTIDE SEQUENCE [LARGE SCALE GENOMIC DNA]</scope>
    <source>
        <strain>IL1403</strain>
    </source>
</reference>
<evidence type="ECO:0000255" key="1">
    <source>
        <dbReference type="HAMAP-Rule" id="MF_00150"/>
    </source>
</evidence>
<sequence length="340" mass="37898">MKKVAIVGIRGYSGLELFRIFYYHPEVEVTKIYATSHYGEKLSEHFPQLEGLTDLTISEFNEEEIMAECDAVFFATSAGVSQKLALTFIDNNFPVIDLSGDFRLADLEIYNKWYKNTNLKNEYLLSGQYNLADIGQAKANYIANPGCYATATLLALYPLVKNKMIDLDSIIVDAKSGLSGAGKGLSDASHFVNVVDNMSMYKINSHQHIPEIAQQLKIWNSNFQALQFSTSLIPVSRGIFVSSYAKVAADFDFETIKNAYEQVYATKNFVRIRRQMPHLSDVIGTNFCDIGLAYNPVTNVLSVVSVIDNLMKGAAGQAVQNFNQLFGYDESLGLKFMPSL</sequence>
<comment type="function">
    <text evidence="1">Catalyzes the NADPH-dependent reduction of N-acetyl-5-glutamyl phosphate to yield N-acetyl-L-glutamate 5-semialdehyde.</text>
</comment>
<comment type="catalytic activity">
    <reaction evidence="1">
        <text>N-acetyl-L-glutamate 5-semialdehyde + phosphate + NADP(+) = N-acetyl-L-glutamyl 5-phosphate + NADPH + H(+)</text>
        <dbReference type="Rhea" id="RHEA:21588"/>
        <dbReference type="ChEBI" id="CHEBI:15378"/>
        <dbReference type="ChEBI" id="CHEBI:29123"/>
        <dbReference type="ChEBI" id="CHEBI:43474"/>
        <dbReference type="ChEBI" id="CHEBI:57783"/>
        <dbReference type="ChEBI" id="CHEBI:57936"/>
        <dbReference type="ChEBI" id="CHEBI:58349"/>
        <dbReference type="EC" id="1.2.1.38"/>
    </reaction>
</comment>
<comment type="pathway">
    <text evidence="1">Amino-acid biosynthesis; L-arginine biosynthesis; N(2)-acetyl-L-ornithine from L-glutamate: step 3/4.</text>
</comment>
<comment type="subcellular location">
    <subcellularLocation>
        <location evidence="1">Cytoplasm</location>
    </subcellularLocation>
</comment>
<comment type="similarity">
    <text evidence="1">Belongs to the NAGSA dehydrogenase family. Type 1 subfamily.</text>
</comment>
<protein>
    <recommendedName>
        <fullName evidence="1">N-acetyl-gamma-glutamyl-phosphate reductase</fullName>
        <shortName evidence="1">AGPR</shortName>
        <ecNumber evidence="1">1.2.1.38</ecNumber>
    </recommendedName>
    <alternativeName>
        <fullName evidence="1">N-acetyl-glutamate semialdehyde dehydrogenase</fullName>
        <shortName evidence="1">NAGSA dehydrogenase</shortName>
    </alternativeName>
</protein>
<feature type="chain" id="PRO_0000112411" description="N-acetyl-gamma-glutamyl-phosphate reductase">
    <location>
        <begin position="1"/>
        <end position="340"/>
    </location>
</feature>
<feature type="active site" evidence="1">
    <location>
        <position position="147"/>
    </location>
</feature>
<gene>
    <name evidence="1" type="primary">argC</name>
    <name type="ordered locus">LL0797</name>
    <name type="ORF">L0104</name>
</gene>
<accession>Q9CHD5</accession>